<name>VM3_OPHHA</name>
<proteinExistence type="evidence at protein level"/>
<sequence length="611" mass="69049">MIQVLLVTICLVVFPYQGSSIILESGKVNDYEVVYPQKIPVLPKSKIQRREQKMYEDTMKYEFKVNGEPVVLHLERNKELFSKDYTETHYSPDGREITTSPPVEDHCYYHGYIQSDIDSTAILNACNGLKGYFRHHGEAYHIEPLKFSDSEAHAVYKYENIEKEDETPKICGVKHSTWESDEPIEKISQKKDFLEEKKYLELYIVADYVMFRKYGRNVTTIRMRVFDMVNYITVVYKALNIHVALIGFEIWSLKDKFVINASTKNNLLHFSIWRSTVLRKRNDNAQLLTGVDLNGYTLGSAYLKAMCDVLQSVGIVQDYSKSPYLVGAAMAHEIGHNLGMEHDTKTCSCMRGNCIMSPEEEGSDFPMEFSSCSLYDFQNYMLTDTPQCLINKPSNTSIIKNAVCGNYVEEEGEECDCGSPEQCENNCCEAATCKLKPGAKCAKGACCKKCQFKKAGAECRAARNECDLPEFCIGQSAECPMDRFHKNGHSCQNDQGYCFRGYCPTLAKQCITLWGSDAKVAPDECFQNNTNGNEYDYCKKTNNVIIPCKPTDVKCGRLYCTGGTENPSEGEKISSDPCKASYSEIEDIGMVDHRTKCGEKMVCSDGKCIPL</sequence>
<comment type="function">
    <text evidence="6">Snake venom zinc metalloproteinase that has hemorrhagic activity. Inhibits ADP-, TMVA- and stejnulxin-induced platelet aggregation in a dose-dependent manner (on washed platelet, but not on platelet rich plasm). Also specifically degrades alpha-chain of fibrinogen (FGA).</text>
</comment>
<comment type="cofactor">
    <cofactor evidence="1">
        <name>Zn(2+)</name>
        <dbReference type="ChEBI" id="CHEBI:29105"/>
    </cofactor>
    <text evidence="1">Binds 1 zinc ion per subunit.</text>
</comment>
<comment type="activity regulation">
    <text>Inhibited by EDTA, but not by PMSF.</text>
</comment>
<comment type="subunit">
    <text>Monomer.</text>
</comment>
<comment type="subcellular location">
    <subcellularLocation>
        <location>Secreted</location>
    </subcellularLocation>
</comment>
<comment type="tissue specificity">
    <text>Expressed by the venom gland.</text>
</comment>
<comment type="miscellaneous">
    <text>Negative results: does not affect beta- (FGB) and gamma-chain (FGG) of fibrinogen. Does not interfere with ristocetin-, thrombin-, and collagen-induced platelet aggregation.</text>
</comment>
<comment type="similarity">
    <text evidence="7">Belongs to the venom metalloproteinase (M12B) family. P-III subfamily. P-IIIa sub-subfamily.</text>
</comment>
<feature type="signal peptide" evidence="2">
    <location>
        <begin position="1"/>
        <end position="20"/>
    </location>
</feature>
<feature type="propeptide" id="PRO_0000417635" evidence="6">
    <location>
        <begin position="21"/>
        <end position="187"/>
    </location>
</feature>
<feature type="chain" id="PRO_0000417636" description="Zinc metalloproteinase-disintegrin-like ohanin">
    <location>
        <begin position="188"/>
        <end position="611"/>
    </location>
</feature>
<feature type="domain" description="Peptidase M12B" evidence="4">
    <location>
        <begin position="198"/>
        <end position="393"/>
    </location>
</feature>
<feature type="domain" description="Disintegrin" evidence="3">
    <location>
        <begin position="401"/>
        <end position="487"/>
    </location>
</feature>
<feature type="short sequence motif" description="D/ECD-tripeptide">
    <location>
        <begin position="465"/>
        <end position="467"/>
    </location>
</feature>
<feature type="active site" evidence="4 5">
    <location>
        <position position="333"/>
    </location>
</feature>
<feature type="binding site" evidence="1">
    <location>
        <position position="332"/>
    </location>
    <ligand>
        <name>Zn(2+)</name>
        <dbReference type="ChEBI" id="CHEBI:29105"/>
        <note>catalytic</note>
    </ligand>
</feature>
<feature type="binding site" evidence="1">
    <location>
        <position position="336"/>
    </location>
    <ligand>
        <name>Zn(2+)</name>
        <dbReference type="ChEBI" id="CHEBI:29105"/>
        <note>catalytic</note>
    </ligand>
</feature>
<feature type="binding site" evidence="1">
    <location>
        <position position="342"/>
    </location>
    <ligand>
        <name>Zn(2+)</name>
        <dbReference type="ChEBI" id="CHEBI:29105"/>
        <note>catalytic</note>
    </ligand>
</feature>
<feature type="glycosylation site" description="N-linked (GlcNAc...) asparagine" evidence="2">
    <location>
        <position position="217"/>
    </location>
</feature>
<feature type="glycosylation site" description="N-linked (GlcNAc...) asparagine" evidence="2">
    <location>
        <position position="260"/>
    </location>
</feature>
<feature type="glycosylation site" description="N-linked (GlcNAc...) asparagine" evidence="2">
    <location>
        <position position="395"/>
    </location>
</feature>
<feature type="glycosylation site" description="N-linked (GlcNAc...) asparagine" evidence="2">
    <location>
        <position position="528"/>
    </location>
</feature>
<feature type="disulfide bond" evidence="1">
    <location>
        <begin position="307"/>
        <end position="388"/>
    </location>
</feature>
<feature type="disulfide bond" evidence="1">
    <location>
        <begin position="347"/>
        <end position="372"/>
    </location>
</feature>
<feature type="disulfide bond" evidence="1">
    <location>
        <begin position="349"/>
        <end position="354"/>
    </location>
</feature>
<feature type="disulfide bond" evidence="1">
    <location>
        <begin position="404"/>
        <end position="433"/>
    </location>
</feature>
<feature type="disulfide bond" evidence="1">
    <location>
        <begin position="415"/>
        <end position="428"/>
    </location>
</feature>
<feature type="disulfide bond" evidence="1">
    <location>
        <begin position="417"/>
        <end position="423"/>
    </location>
</feature>
<feature type="disulfide bond" evidence="1">
    <location>
        <begin position="427"/>
        <end position="450"/>
    </location>
</feature>
<feature type="disulfide bond" evidence="1">
    <location>
        <begin position="441"/>
        <end position="447"/>
    </location>
</feature>
<feature type="disulfide bond" evidence="1">
    <location>
        <begin position="446"/>
        <end position="472"/>
    </location>
</feature>
<feature type="disulfide bond" evidence="1">
    <location>
        <begin position="459"/>
        <end position="479"/>
    </location>
</feature>
<feature type="disulfide bond" evidence="1">
    <location>
        <begin position="466"/>
        <end position="498"/>
    </location>
</feature>
<feature type="disulfide bond" evidence="1">
    <location>
        <begin position="491"/>
        <end position="503"/>
    </location>
</feature>
<feature type="disulfide bond" evidence="1">
    <location>
        <begin position="510"/>
        <end position="560"/>
    </location>
</feature>
<feature type="disulfide bond" evidence="1">
    <location>
        <begin position="525"/>
        <end position="578"/>
    </location>
</feature>
<feature type="disulfide bond" evidence="1">
    <location>
        <begin position="538"/>
        <end position="548"/>
    </location>
</feature>
<feature type="disulfide bond" evidence="1">
    <location>
        <begin position="555"/>
        <end position="603"/>
    </location>
</feature>
<feature type="disulfide bond" evidence="1">
    <location>
        <begin position="597"/>
        <end position="608"/>
    </location>
</feature>
<protein>
    <recommendedName>
        <fullName>Zinc metalloproteinase-disintegrin-like ohanin</fullName>
        <ecNumber>3.4.24.-</ecNumber>
    </recommendedName>
    <alternativeName>
        <fullName>Snake venom metalloproteinase</fullName>
        <shortName>SVMP</shortName>
    </alternativeName>
</protein>
<reference key="1">
    <citation type="journal article" date="2007" name="Toxicon">
        <title>Isolation and cloning of a metalloproteinase from king cobra snake venom.</title>
        <authorList>
            <person name="Guo X.-X."/>
            <person name="Zeng L."/>
            <person name="Lee W.-H."/>
            <person name="Zhang Y."/>
            <person name="Jin Y."/>
        </authorList>
    </citation>
    <scope>NUCLEOTIDE SEQUENCE [MRNA]</scope>
    <scope>PROTEIN SEQUENCE OF 188-212</scope>
    <scope>FUNCTION</scope>
    <scope>IDENTIFICATION BY MASS SPECTROMETRY</scope>
    <source>
        <tissue>Venom</tissue>
        <tissue>Venom gland</tissue>
    </source>
</reference>
<reference key="2">
    <citation type="journal article" date="2013" name="Proc. Natl. Acad. Sci. U.S.A.">
        <title>The king cobra genome reveals dynamic gene evolution and adaptation in the snake venom system.</title>
        <authorList>
            <person name="Vonk F.J."/>
            <person name="Casewell N.R."/>
            <person name="Henkel C.V."/>
            <person name="Heimberg A.M."/>
            <person name="Jansen H.J."/>
            <person name="McCleary R.J."/>
            <person name="Kerkkamp H.M."/>
            <person name="Vos R.A."/>
            <person name="Guerreiro I."/>
            <person name="Calvete J.J."/>
            <person name="Wuster W."/>
            <person name="Woods A.E."/>
            <person name="Logan J.M."/>
            <person name="Harrison R.A."/>
            <person name="Castoe T.A."/>
            <person name="de Koning A.P."/>
            <person name="Pollock D.D."/>
            <person name="Yandell M."/>
            <person name="Calderon D."/>
            <person name="Renjifo C."/>
            <person name="Currier R.B."/>
            <person name="Salgado D."/>
            <person name="Pla D."/>
            <person name="Sanz L."/>
            <person name="Hyder A.S."/>
            <person name="Ribeiro J.M."/>
            <person name="Arntzen J.W."/>
            <person name="van den Thillart G.E."/>
            <person name="Boetzer M."/>
            <person name="Pirovano W."/>
            <person name="Dirks R.P."/>
            <person name="Spaink H.P."/>
            <person name="Duboule D."/>
            <person name="McGlinn E."/>
            <person name="Kini R.M."/>
            <person name="Richardson M.K."/>
        </authorList>
    </citation>
    <scope>IDENTIFICATION BY MASS SPECTROMETRY</scope>
    <source>
        <tissue>Venom</tissue>
    </source>
</reference>
<accession>A3R0T9</accession>
<organism>
    <name type="scientific">Ophiophagus hannah</name>
    <name type="common">King cobra</name>
    <name type="synonym">Naja hannah</name>
    <dbReference type="NCBI Taxonomy" id="8665"/>
    <lineage>
        <taxon>Eukaryota</taxon>
        <taxon>Metazoa</taxon>
        <taxon>Chordata</taxon>
        <taxon>Craniata</taxon>
        <taxon>Vertebrata</taxon>
        <taxon>Euteleostomi</taxon>
        <taxon>Lepidosauria</taxon>
        <taxon>Squamata</taxon>
        <taxon>Bifurcata</taxon>
        <taxon>Unidentata</taxon>
        <taxon>Episquamata</taxon>
        <taxon>Toxicofera</taxon>
        <taxon>Serpentes</taxon>
        <taxon>Colubroidea</taxon>
        <taxon>Elapidae</taxon>
        <taxon>Elapinae</taxon>
        <taxon>Ophiophagus</taxon>
    </lineage>
</organism>
<evidence type="ECO:0000250" key="1"/>
<evidence type="ECO:0000255" key="2"/>
<evidence type="ECO:0000255" key="3">
    <source>
        <dbReference type="PROSITE-ProRule" id="PRU00068"/>
    </source>
</evidence>
<evidence type="ECO:0000255" key="4">
    <source>
        <dbReference type="PROSITE-ProRule" id="PRU00276"/>
    </source>
</evidence>
<evidence type="ECO:0000255" key="5">
    <source>
        <dbReference type="PROSITE-ProRule" id="PRU10095"/>
    </source>
</evidence>
<evidence type="ECO:0000269" key="6">
    <source>
    </source>
</evidence>
<evidence type="ECO:0000305" key="7"/>
<keyword id="KW-1217">Cell adhesion impairing toxin</keyword>
<keyword id="KW-0903">Direct protein sequencing</keyword>
<keyword id="KW-1015">Disulfide bond</keyword>
<keyword id="KW-1206">Fibrinogenolytic toxin</keyword>
<keyword id="KW-0325">Glycoprotein</keyword>
<keyword id="KW-1200">Hemorrhagic toxin</keyword>
<keyword id="KW-1199">Hemostasis impairing toxin</keyword>
<keyword id="KW-0378">Hydrolase</keyword>
<keyword id="KW-0479">Metal-binding</keyword>
<keyword id="KW-0482">Metalloprotease</keyword>
<keyword id="KW-1201">Platelet aggregation inhibiting toxin</keyword>
<keyword id="KW-0645">Protease</keyword>
<keyword id="KW-0964">Secreted</keyword>
<keyword id="KW-0732">Signal</keyword>
<keyword id="KW-0800">Toxin</keyword>
<keyword id="KW-0862">Zinc</keyword>
<keyword id="KW-0865">Zymogen</keyword>
<dbReference type="EC" id="3.4.24.-"/>
<dbReference type="EMBL" id="EF065674">
    <property type="protein sequence ID" value="ABM87941.1"/>
    <property type="molecule type" value="mRNA"/>
</dbReference>
<dbReference type="SMR" id="A3R0T9"/>
<dbReference type="MEROPS" id="M12.331"/>
<dbReference type="TopDownProteomics" id="A3R0T9"/>
<dbReference type="BRENDA" id="3.4.24.51">
    <property type="organism ID" value="4419"/>
</dbReference>
<dbReference type="GO" id="GO:0005576">
    <property type="term" value="C:extracellular region"/>
    <property type="evidence" value="ECO:0007669"/>
    <property type="project" value="UniProtKB-SubCell"/>
</dbReference>
<dbReference type="GO" id="GO:0043655">
    <property type="term" value="C:host extracellular space"/>
    <property type="evidence" value="ECO:0000303"/>
    <property type="project" value="UniProtKB"/>
</dbReference>
<dbReference type="GO" id="GO:0005886">
    <property type="term" value="C:plasma membrane"/>
    <property type="evidence" value="ECO:0007669"/>
    <property type="project" value="TreeGrafter"/>
</dbReference>
<dbReference type="GO" id="GO:0004222">
    <property type="term" value="F:metalloendopeptidase activity"/>
    <property type="evidence" value="ECO:0000314"/>
    <property type="project" value="UniProtKB"/>
</dbReference>
<dbReference type="GO" id="GO:0090729">
    <property type="term" value="F:toxin activity"/>
    <property type="evidence" value="ECO:0007669"/>
    <property type="project" value="UniProtKB-KW"/>
</dbReference>
<dbReference type="GO" id="GO:0008270">
    <property type="term" value="F:zinc ion binding"/>
    <property type="evidence" value="ECO:0000304"/>
    <property type="project" value="UniProtKB"/>
</dbReference>
<dbReference type="GO" id="GO:0006508">
    <property type="term" value="P:proteolysis"/>
    <property type="evidence" value="ECO:0007669"/>
    <property type="project" value="UniProtKB-KW"/>
</dbReference>
<dbReference type="GO" id="GO:0044485">
    <property type="term" value="P:venom-mediated fibrinogenolysis in another organism"/>
    <property type="evidence" value="ECO:0000314"/>
    <property type="project" value="UniProtKB"/>
</dbReference>
<dbReference type="GO" id="GO:0044358">
    <property type="term" value="P:venom-mediated hemorrhage in another organism"/>
    <property type="evidence" value="ECO:0000314"/>
    <property type="project" value="UniProtKB"/>
</dbReference>
<dbReference type="GO" id="GO:0044477">
    <property type="term" value="P:venom-mediated suppression of platelet aggregation"/>
    <property type="evidence" value="ECO:0000314"/>
    <property type="project" value="UniProtKB"/>
</dbReference>
<dbReference type="CDD" id="cd04269">
    <property type="entry name" value="ZnMc_adamalysin_II_like"/>
    <property type="match status" value="1"/>
</dbReference>
<dbReference type="FunFam" id="3.40.390.10:FF:000002">
    <property type="entry name" value="Disintegrin and metalloproteinase domain-containing protein 22"/>
    <property type="match status" value="1"/>
</dbReference>
<dbReference type="FunFam" id="4.10.70.10:FF:000001">
    <property type="entry name" value="Disintegrin and metalloproteinase domain-containing protein 22"/>
    <property type="match status" value="1"/>
</dbReference>
<dbReference type="Gene3D" id="3.40.390.10">
    <property type="entry name" value="Collagenase (Catalytic Domain)"/>
    <property type="match status" value="1"/>
</dbReference>
<dbReference type="Gene3D" id="4.10.70.10">
    <property type="entry name" value="Disintegrin domain"/>
    <property type="match status" value="1"/>
</dbReference>
<dbReference type="InterPro" id="IPR006586">
    <property type="entry name" value="ADAM_Cys-rich"/>
</dbReference>
<dbReference type="InterPro" id="IPR018358">
    <property type="entry name" value="Disintegrin_CS"/>
</dbReference>
<dbReference type="InterPro" id="IPR001762">
    <property type="entry name" value="Disintegrin_dom"/>
</dbReference>
<dbReference type="InterPro" id="IPR036436">
    <property type="entry name" value="Disintegrin_dom_sf"/>
</dbReference>
<dbReference type="InterPro" id="IPR024079">
    <property type="entry name" value="MetalloPept_cat_dom_sf"/>
</dbReference>
<dbReference type="InterPro" id="IPR001590">
    <property type="entry name" value="Peptidase_M12B"/>
</dbReference>
<dbReference type="InterPro" id="IPR002870">
    <property type="entry name" value="Peptidase_M12B_N"/>
</dbReference>
<dbReference type="InterPro" id="IPR034027">
    <property type="entry name" value="Reprolysin_adamalysin"/>
</dbReference>
<dbReference type="PANTHER" id="PTHR11905">
    <property type="entry name" value="ADAM A DISINTEGRIN AND METALLOPROTEASE DOMAIN"/>
    <property type="match status" value="1"/>
</dbReference>
<dbReference type="PANTHER" id="PTHR11905:SF32">
    <property type="entry name" value="DISINTEGRIN AND METALLOPROTEINASE DOMAIN-CONTAINING PROTEIN 28"/>
    <property type="match status" value="1"/>
</dbReference>
<dbReference type="Pfam" id="PF08516">
    <property type="entry name" value="ADAM_CR"/>
    <property type="match status" value="1"/>
</dbReference>
<dbReference type="Pfam" id="PF00200">
    <property type="entry name" value="Disintegrin"/>
    <property type="match status" value="1"/>
</dbReference>
<dbReference type="Pfam" id="PF01562">
    <property type="entry name" value="Pep_M12B_propep"/>
    <property type="match status" value="1"/>
</dbReference>
<dbReference type="Pfam" id="PF01421">
    <property type="entry name" value="Reprolysin"/>
    <property type="match status" value="1"/>
</dbReference>
<dbReference type="PRINTS" id="PR00289">
    <property type="entry name" value="DISINTEGRIN"/>
</dbReference>
<dbReference type="SMART" id="SM00608">
    <property type="entry name" value="ACR"/>
    <property type="match status" value="1"/>
</dbReference>
<dbReference type="SMART" id="SM00050">
    <property type="entry name" value="DISIN"/>
    <property type="match status" value="1"/>
</dbReference>
<dbReference type="SUPFAM" id="SSF57552">
    <property type="entry name" value="Blood coagulation inhibitor (disintegrin)"/>
    <property type="match status" value="1"/>
</dbReference>
<dbReference type="SUPFAM" id="SSF55486">
    <property type="entry name" value="Metalloproteases ('zincins'), catalytic domain"/>
    <property type="match status" value="1"/>
</dbReference>
<dbReference type="PROSITE" id="PS50215">
    <property type="entry name" value="ADAM_MEPRO"/>
    <property type="match status" value="1"/>
</dbReference>
<dbReference type="PROSITE" id="PS00427">
    <property type="entry name" value="DISINTEGRIN_1"/>
    <property type="match status" value="1"/>
</dbReference>
<dbReference type="PROSITE" id="PS50214">
    <property type="entry name" value="DISINTEGRIN_2"/>
    <property type="match status" value="1"/>
</dbReference>
<dbReference type="PROSITE" id="PS00142">
    <property type="entry name" value="ZINC_PROTEASE"/>
    <property type="match status" value="1"/>
</dbReference>